<gene>
    <name evidence="16" type="primary">RBM7</name>
</gene>
<proteinExistence type="evidence at protein level"/>
<reference key="1">
    <citation type="journal article" date="2003" name="J. Androl.">
        <title>Spermatogenetic expression of RNA-binding motif protein 7, a protein that interacts with splicing factors.</title>
        <authorList>
            <person name="Guo T.B."/>
            <person name="Boros L.G."/>
            <person name="Chan K.C."/>
            <person name="Hikim A.P."/>
            <person name="Hudson A.P."/>
            <person name="Swerdloff R.S."/>
            <person name="Mitchell A.P."/>
            <person name="Salameh W.A."/>
        </authorList>
    </citation>
    <scope>NUCLEOTIDE SEQUENCE [MRNA]</scope>
    <source>
        <tissue>Testis</tissue>
    </source>
</reference>
<reference key="2">
    <citation type="journal article" date="2004" name="Nat. Genet.">
        <title>Complete sequencing and characterization of 21,243 full-length human cDNAs.</title>
        <authorList>
            <person name="Ota T."/>
            <person name="Suzuki Y."/>
            <person name="Nishikawa T."/>
            <person name="Otsuki T."/>
            <person name="Sugiyama T."/>
            <person name="Irie R."/>
            <person name="Wakamatsu A."/>
            <person name="Hayashi K."/>
            <person name="Sato H."/>
            <person name="Nagai K."/>
            <person name="Kimura K."/>
            <person name="Makita H."/>
            <person name="Sekine M."/>
            <person name="Obayashi M."/>
            <person name="Nishi T."/>
            <person name="Shibahara T."/>
            <person name="Tanaka T."/>
            <person name="Ishii S."/>
            <person name="Yamamoto J."/>
            <person name="Saito K."/>
            <person name="Kawai Y."/>
            <person name="Isono Y."/>
            <person name="Nakamura Y."/>
            <person name="Nagahari K."/>
            <person name="Murakami K."/>
            <person name="Yasuda T."/>
            <person name="Iwayanagi T."/>
            <person name="Wagatsuma M."/>
            <person name="Shiratori A."/>
            <person name="Sudo H."/>
            <person name="Hosoiri T."/>
            <person name="Kaku Y."/>
            <person name="Kodaira H."/>
            <person name="Kondo H."/>
            <person name="Sugawara M."/>
            <person name="Takahashi M."/>
            <person name="Kanda K."/>
            <person name="Yokoi T."/>
            <person name="Furuya T."/>
            <person name="Kikkawa E."/>
            <person name="Omura Y."/>
            <person name="Abe K."/>
            <person name="Kamihara K."/>
            <person name="Katsuta N."/>
            <person name="Sato K."/>
            <person name="Tanikawa M."/>
            <person name="Yamazaki M."/>
            <person name="Ninomiya K."/>
            <person name="Ishibashi T."/>
            <person name="Yamashita H."/>
            <person name="Murakawa K."/>
            <person name="Fujimori K."/>
            <person name="Tanai H."/>
            <person name="Kimata M."/>
            <person name="Watanabe M."/>
            <person name="Hiraoka S."/>
            <person name="Chiba Y."/>
            <person name="Ishida S."/>
            <person name="Ono Y."/>
            <person name="Takiguchi S."/>
            <person name="Watanabe S."/>
            <person name="Yosida M."/>
            <person name="Hotuta T."/>
            <person name="Kusano J."/>
            <person name="Kanehori K."/>
            <person name="Takahashi-Fujii A."/>
            <person name="Hara H."/>
            <person name="Tanase T.-O."/>
            <person name="Nomura Y."/>
            <person name="Togiya S."/>
            <person name="Komai F."/>
            <person name="Hara R."/>
            <person name="Takeuchi K."/>
            <person name="Arita M."/>
            <person name="Imose N."/>
            <person name="Musashino K."/>
            <person name="Yuuki H."/>
            <person name="Oshima A."/>
            <person name="Sasaki N."/>
            <person name="Aotsuka S."/>
            <person name="Yoshikawa Y."/>
            <person name="Matsunawa H."/>
            <person name="Ichihara T."/>
            <person name="Shiohata N."/>
            <person name="Sano S."/>
            <person name="Moriya S."/>
            <person name="Momiyama H."/>
            <person name="Satoh N."/>
            <person name="Takami S."/>
            <person name="Terashima Y."/>
            <person name="Suzuki O."/>
            <person name="Nakagawa S."/>
            <person name="Senoh A."/>
            <person name="Mizoguchi H."/>
            <person name="Goto Y."/>
            <person name="Shimizu F."/>
            <person name="Wakebe H."/>
            <person name="Hishigaki H."/>
            <person name="Watanabe T."/>
            <person name="Sugiyama A."/>
            <person name="Takemoto M."/>
            <person name="Kawakami B."/>
            <person name="Yamazaki M."/>
            <person name="Watanabe K."/>
            <person name="Kumagai A."/>
            <person name="Itakura S."/>
            <person name="Fukuzumi Y."/>
            <person name="Fujimori Y."/>
            <person name="Komiyama M."/>
            <person name="Tashiro H."/>
            <person name="Tanigami A."/>
            <person name="Fujiwara T."/>
            <person name="Ono T."/>
            <person name="Yamada K."/>
            <person name="Fujii Y."/>
            <person name="Ozaki K."/>
            <person name="Hirao M."/>
            <person name="Ohmori Y."/>
            <person name="Kawabata A."/>
            <person name="Hikiji T."/>
            <person name="Kobatake N."/>
            <person name="Inagaki H."/>
            <person name="Ikema Y."/>
            <person name="Okamoto S."/>
            <person name="Okitani R."/>
            <person name="Kawakami T."/>
            <person name="Noguchi S."/>
            <person name="Itoh T."/>
            <person name="Shigeta K."/>
            <person name="Senba T."/>
            <person name="Matsumura K."/>
            <person name="Nakajima Y."/>
            <person name="Mizuno T."/>
            <person name="Morinaga M."/>
            <person name="Sasaki M."/>
            <person name="Togashi T."/>
            <person name="Oyama M."/>
            <person name="Hata H."/>
            <person name="Watanabe M."/>
            <person name="Komatsu T."/>
            <person name="Mizushima-Sugano J."/>
            <person name="Satoh T."/>
            <person name="Shirai Y."/>
            <person name="Takahashi Y."/>
            <person name="Nakagawa K."/>
            <person name="Okumura K."/>
            <person name="Nagase T."/>
            <person name="Nomura N."/>
            <person name="Kikuchi H."/>
            <person name="Masuho Y."/>
            <person name="Yamashita R."/>
            <person name="Nakai K."/>
            <person name="Yada T."/>
            <person name="Nakamura Y."/>
            <person name="Ohara O."/>
            <person name="Isogai T."/>
            <person name="Sugano S."/>
        </authorList>
    </citation>
    <scope>NUCLEOTIDE SEQUENCE [LARGE SCALE MRNA]</scope>
    <source>
        <tissue>Brain</tissue>
        <tissue>Placenta</tissue>
    </source>
</reference>
<reference key="3">
    <citation type="submission" date="2005-07" db="EMBL/GenBank/DDBJ databases">
        <authorList>
            <person name="Mural R.J."/>
            <person name="Istrail S."/>
            <person name="Sutton G.G."/>
            <person name="Florea L."/>
            <person name="Halpern A.L."/>
            <person name="Mobarry C.M."/>
            <person name="Lippert R."/>
            <person name="Walenz B."/>
            <person name="Shatkay H."/>
            <person name="Dew I."/>
            <person name="Miller J.R."/>
            <person name="Flanigan M.J."/>
            <person name="Edwards N.J."/>
            <person name="Bolanos R."/>
            <person name="Fasulo D."/>
            <person name="Halldorsson B.V."/>
            <person name="Hannenhalli S."/>
            <person name="Turner R."/>
            <person name="Yooseph S."/>
            <person name="Lu F."/>
            <person name="Nusskern D.R."/>
            <person name="Shue B.C."/>
            <person name="Zheng X.H."/>
            <person name="Zhong F."/>
            <person name="Delcher A.L."/>
            <person name="Huson D.H."/>
            <person name="Kravitz S.A."/>
            <person name="Mouchard L."/>
            <person name="Reinert K."/>
            <person name="Remington K.A."/>
            <person name="Clark A.G."/>
            <person name="Waterman M.S."/>
            <person name="Eichler E.E."/>
            <person name="Adams M.D."/>
            <person name="Hunkapiller M.W."/>
            <person name="Myers E.W."/>
            <person name="Venter J.C."/>
        </authorList>
    </citation>
    <scope>NUCLEOTIDE SEQUENCE [LARGE SCALE GENOMIC DNA]</scope>
</reference>
<reference key="4">
    <citation type="journal article" date="2004" name="Genome Res.">
        <title>The status, quality, and expansion of the NIH full-length cDNA project: the Mammalian Gene Collection (MGC).</title>
        <authorList>
            <consortium name="The MGC Project Team"/>
        </authorList>
    </citation>
    <scope>NUCLEOTIDE SEQUENCE [LARGE SCALE MRNA]</scope>
    <source>
        <tissue>Brain</tissue>
        <tissue>Lung</tissue>
        <tissue>Testis</tissue>
    </source>
</reference>
<reference key="5">
    <citation type="journal article" date="2005" name="Biochem. Biophys. Res. Commun.">
        <title>Zcchc8 is a glycogen synthase kinase-3 substrate that interacts with RNA-binding proteins.</title>
        <authorList>
            <person name="Gustafson M.P."/>
            <person name="Welcker M."/>
            <person name="Hwang H.C."/>
            <person name="Clurman B.E."/>
        </authorList>
    </citation>
    <scope>INTERACTION WITH ZCCHC8</scope>
</reference>
<reference key="6">
    <citation type="journal article" date="2008" name="Proc. Natl. Acad. Sci. U.S.A.">
        <title>A quantitative atlas of mitotic phosphorylation.</title>
        <authorList>
            <person name="Dephoure N."/>
            <person name="Zhou C."/>
            <person name="Villen J."/>
            <person name="Beausoleil S.A."/>
            <person name="Bakalarski C.E."/>
            <person name="Elledge S.J."/>
            <person name="Gygi S.P."/>
        </authorList>
    </citation>
    <scope>IDENTIFICATION BY MASS SPECTROMETRY [LARGE SCALE ANALYSIS]</scope>
    <source>
        <tissue>Cervix carcinoma</tissue>
    </source>
</reference>
<reference key="7">
    <citation type="journal article" date="2009" name="Sci. Signal.">
        <title>Quantitative phosphoproteomic analysis of T cell receptor signaling reveals system-wide modulation of protein-protein interactions.</title>
        <authorList>
            <person name="Mayya V."/>
            <person name="Lundgren D.H."/>
            <person name="Hwang S.-I."/>
            <person name="Rezaul K."/>
            <person name="Wu L."/>
            <person name="Eng J.K."/>
            <person name="Rodionov V."/>
            <person name="Han D.K."/>
        </authorList>
    </citation>
    <scope>PHOSPHORYLATION [LARGE SCALE ANALYSIS] AT SER-204</scope>
    <scope>IDENTIFICATION BY MASS SPECTROMETRY [LARGE SCALE ANALYSIS]</scope>
    <source>
        <tissue>Leukemic T-cell</tissue>
    </source>
</reference>
<reference key="8">
    <citation type="journal article" date="2011" name="Mol. Cell">
        <title>Interaction profiling identifies the human nuclear exosome targeting complex.</title>
        <authorList>
            <person name="Lubas M."/>
            <person name="Christensen M.S."/>
            <person name="Kristiansen M.S."/>
            <person name="Domanski M."/>
            <person name="Falkenby L.G."/>
            <person name="Lykke-Andersen S."/>
            <person name="Andersen J.S."/>
            <person name="Dziembowski A."/>
            <person name="Jensen T.H."/>
        </authorList>
    </citation>
    <scope>SUBCELLULAR LOCATION</scope>
</reference>
<reference key="9">
    <citation type="journal article" date="2013" name="J. Proteome Res.">
        <title>Toward a comprehensive characterization of a human cancer cell phosphoproteome.</title>
        <authorList>
            <person name="Zhou H."/>
            <person name="Di Palma S."/>
            <person name="Preisinger C."/>
            <person name="Peng M."/>
            <person name="Polat A.N."/>
            <person name="Heck A.J."/>
            <person name="Mohammed S."/>
        </authorList>
    </citation>
    <scope>PHOSPHORYLATION [LARGE SCALE ANALYSIS] AT SER-204</scope>
    <scope>IDENTIFICATION BY MASS SPECTROMETRY [LARGE SCALE ANALYSIS]</scope>
    <source>
        <tissue>Cervix carcinoma</tissue>
        <tissue>Erythroleukemia</tissue>
    </source>
</reference>
<reference key="10">
    <citation type="journal article" date="2014" name="Genes Dev.">
        <title>A quantitative 14-3-3 interaction screen connects the nuclear exosome targeting complex to the DNA damage response.</title>
        <authorList>
            <person name="Blasius M."/>
            <person name="Wagner S.A."/>
            <person name="Choudhary C."/>
            <person name="Bartek J."/>
            <person name="Jackson S.P."/>
        </authorList>
    </citation>
    <scope>INTERACTION WITH YWHAE AND YWHAZ</scope>
    <scope>PHOSPHORYLATION</scope>
    <scope>MUTAGENESIS OF SER-136 AND SER-204</scope>
    <scope>FUNCTION</scope>
</reference>
<reference key="11">
    <citation type="journal article" date="2014" name="J. Proteomics">
        <title>An enzyme assisted RP-RPLC approach for in-depth analysis of human liver phosphoproteome.</title>
        <authorList>
            <person name="Bian Y."/>
            <person name="Song C."/>
            <person name="Cheng K."/>
            <person name="Dong M."/>
            <person name="Wang F."/>
            <person name="Huang J."/>
            <person name="Sun D."/>
            <person name="Wang L."/>
            <person name="Ye M."/>
            <person name="Zou H."/>
        </authorList>
    </citation>
    <scope>PHOSPHORYLATION [LARGE SCALE ANALYSIS] AT SER-204</scope>
    <scope>IDENTIFICATION BY MASS SPECTROMETRY [LARGE SCALE ANALYSIS]</scope>
    <source>
        <tissue>Liver</tissue>
    </source>
</reference>
<reference key="12">
    <citation type="journal article" date="2014" name="Mol. Cell. Proteomics">
        <title>Immunoaffinity enrichment and mass spectrometry analysis of protein methylation.</title>
        <authorList>
            <person name="Guo A."/>
            <person name="Gu H."/>
            <person name="Zhou J."/>
            <person name="Mulhern D."/>
            <person name="Wang Y."/>
            <person name="Lee K.A."/>
            <person name="Yang V."/>
            <person name="Aguiar M."/>
            <person name="Kornhauser J."/>
            <person name="Jia X."/>
            <person name="Ren J."/>
            <person name="Beausoleil S.A."/>
            <person name="Silva J.C."/>
            <person name="Vemulapalli V."/>
            <person name="Bedford M.T."/>
            <person name="Comb M.J."/>
        </authorList>
    </citation>
    <scope>METHYLATION [LARGE SCALE ANALYSIS] AT ARG-152</scope>
    <scope>IDENTIFICATION BY MASS SPECTROMETRY [LARGE SCALE ANALYSIS]</scope>
    <source>
        <tissue>Colon carcinoma</tissue>
    </source>
</reference>
<reference key="13">
    <citation type="journal article" date="2015" name="Cell Rep.">
        <title>The human nuclear exosome targeting complex is loaded onto newly synthesized RNA to direct early ribonucleolysis.</title>
        <authorList>
            <person name="Lubas M."/>
            <person name="Andersen P.R."/>
            <person name="Schein A."/>
            <person name="Dziembowski A."/>
            <person name="Kudla G."/>
            <person name="Jensen T.H."/>
        </authorList>
    </citation>
    <scope>FUNCTION</scope>
</reference>
<reference key="14">
    <citation type="journal article" date="2015" name="Hum. Mol. Genet.">
        <title>Biochemical and cellular analysis of Ogden syndrome reveals downstream Nt-acetylation defects.</title>
        <authorList>
            <person name="Myklebust L.M."/>
            <person name="Van Damme P."/>
            <person name="Stoeve S.I."/>
            <person name="Doerfel M.J."/>
            <person name="Abboud A."/>
            <person name="Kalvik T.V."/>
            <person name="Grauffel C."/>
            <person name="Jonckheere V."/>
            <person name="Wu Y."/>
            <person name="Swensen J."/>
            <person name="Kaasa H."/>
            <person name="Liszczak G."/>
            <person name="Marmorstein R."/>
            <person name="Reuter N."/>
            <person name="Lyon G.J."/>
            <person name="Gevaert K."/>
            <person name="Arnesen T."/>
        </authorList>
    </citation>
    <scope>ACETYLATION AT GLY-2</scope>
    <scope>CLEAVAGE OF INITIATOR METHIONINE</scope>
</reference>
<reference key="15">
    <citation type="journal article" date="2015" name="RNA">
        <title>p38MAPK/MK2-mediated phosphorylation of RBM7 regulates the human nuclear exosome targeting complex.</title>
        <authorList>
            <person name="Tiedje C."/>
            <person name="Lubas M."/>
            <person name="Tehrani M."/>
            <person name="Menon M.B."/>
            <person name="Ronkina N."/>
            <person name="Rousseau S."/>
            <person name="Cohen P."/>
            <person name="Kotlyarov A."/>
            <person name="Gaestel M."/>
        </authorList>
    </citation>
    <scope>PHOSPHORYLATION AT SER-136</scope>
    <scope>MUTAGENESIS OF SER-136</scope>
    <scope>FUNCTION</scope>
</reference>
<reference key="16">
    <citation type="journal article" date="2016" name="Mol. Cell">
        <title>Identification of a nuclear exosome decay pathway for processed transcripts.</title>
        <authorList>
            <person name="Meola N."/>
            <person name="Domanski M."/>
            <person name="Karadoulama E."/>
            <person name="Chen Y."/>
            <person name="Gentil C."/>
            <person name="Pultz D."/>
            <person name="Vitting-Seerup K."/>
            <person name="Lykke-Andersen S."/>
            <person name="Andersen J.S."/>
            <person name="Sandelin A."/>
            <person name="Jensen T.H."/>
        </authorList>
    </citation>
    <scope>SUBUNIT</scope>
    <scope>INTERACTION WITH MTREX AND ZCCHC8</scope>
    <scope>FUNCTION</scope>
</reference>
<reference key="17">
    <citation type="journal article" date="2019" name="Mol. Cell">
        <title>P-TEFb Activation by RBM7 Shapes a Pro-survival Transcriptional Response to Genotoxic Stress.</title>
        <authorList>
            <person name="Bugai A."/>
            <person name="Quaresma A.J.C."/>
            <person name="Friedel C.C."/>
            <person name="Lenasi T."/>
            <person name="Duester R."/>
            <person name="Sibley C.R."/>
            <person name="Fujinaga K."/>
            <person name="Kukanja P."/>
            <person name="Hennig T."/>
            <person name="Blasius M."/>
            <person name="Geyer M."/>
            <person name="Ule J."/>
            <person name="Doelken L."/>
            <person name="Barboric M."/>
        </authorList>
    </citation>
    <scope>MUTAGENESIS OF LYS-50; PHE-52 AND PHE-54</scope>
    <scope>FUNCTION</scope>
    <scope>INTERACTION WITH MEPCE AND LARP7</scope>
</reference>
<reference key="18">
    <citation type="journal article" date="2016" name="Hum. Mol. Genet.">
        <title>Altered RNA metabolism due to a homozygous RBM7 mutation in a patient with spinal motor neuropathy.</title>
        <authorList>
            <person name="Giunta M."/>
            <person name="Edvardson S."/>
            <person name="Xu Y."/>
            <person name="Schuelke M."/>
            <person name="Gomez-Duran A."/>
            <person name="Boczonadi V."/>
            <person name="Elpeleg O."/>
            <person name="Mueller J.S."/>
            <person name="Horvath R."/>
        </authorList>
    </citation>
    <scope>VARIANT ARG-79</scope>
</reference>
<reference evidence="17" key="19">
    <citation type="journal article" date="2015" name="Nucleic Acids Res.">
        <title>RBM7 subunit of the NEXT complex binds U-rich sequences and targets 3'-end extended forms of snRNAs.</title>
        <authorList>
            <person name="Hrossova D."/>
            <person name="Sikorsky T."/>
            <person name="Potesil D."/>
            <person name="Bartosovic M."/>
            <person name="Pasulka J."/>
            <person name="Zdrahal Z."/>
            <person name="Stefl R."/>
            <person name="Vanacova S."/>
        </authorList>
    </citation>
    <scope>STRUCTURE BY NMR OF 6-94</scope>
    <scope>DOMAIN</scope>
    <scope>MUTAGENESIS OF PHE-13 AND PHE-52</scope>
    <scope>SUBCELLULAR LOCATION</scope>
    <scope>FUNCTION</scope>
</reference>
<reference evidence="18" key="20">
    <citation type="journal article" date="2016" name="Acta Crystallogr. F">
        <title>RRM domain of human RBM7: purification, crystallization and structure determination.</title>
        <authorList>
            <person name="Sofos N."/>
            <person name="Winkler M.B."/>
            <person name="Brodersen D.E."/>
        </authorList>
    </citation>
    <scope>X-RAY CRYSTALLOGRAPHY (2.52 ANGSTROMS) OF 1-91</scope>
</reference>
<reference evidence="19 20" key="21">
    <citation type="journal article" date="2016" name="Nat. Commun.">
        <title>Structure of the RBM7-ZCCHC8 core of the NEXT complex reveals connections to splicing factors.</title>
        <authorList>
            <person name="Falk S."/>
            <person name="Finogenova K."/>
            <person name="Melko M."/>
            <person name="Benda C."/>
            <person name="Lykke-Andersen S."/>
            <person name="Jensen T.H."/>
            <person name="Conti E."/>
        </authorList>
    </citation>
    <scope>X-RAY CRYSTALLOGRAPHY (2.00 ANGSTROMS) OF 1-86 IN COMPLEX WITH ZCCHC8</scope>
    <scope>SUBUNIT</scope>
    <scope>INTERACTION WITH ZCCHC8 AND SF3B2/SAP145</scope>
    <scope>MUTAGENESIS OF LEU-25; LEU-29; TYR-65 AND LEU-69</scope>
</reference>
<feature type="initiator methionine" description="Removed" evidence="7">
    <location>
        <position position="1"/>
    </location>
</feature>
<feature type="chain" id="PRO_0000081761" description="RNA-binding protein 7">
    <location>
        <begin position="2"/>
        <end position="266"/>
    </location>
</feature>
<feature type="domain" description="RRM" evidence="2">
    <location>
        <begin position="10"/>
        <end position="87"/>
    </location>
</feature>
<feature type="region of interest" description="ZCCHC8 binding" evidence="13 19 20">
    <location>
        <begin position="25"/>
        <end position="35"/>
    </location>
</feature>
<feature type="region of interest" description="ZCCHC8 binding" evidence="13 19 20">
    <location>
        <begin position="59"/>
        <end position="76"/>
    </location>
</feature>
<feature type="region of interest" description="Disordered" evidence="3">
    <location>
        <begin position="90"/>
        <end position="118"/>
    </location>
</feature>
<feature type="region of interest" description="Disordered" evidence="3">
    <location>
        <begin position="162"/>
        <end position="266"/>
    </location>
</feature>
<feature type="compositionally biased region" description="Polar residues" evidence="3">
    <location>
        <begin position="90"/>
        <end position="115"/>
    </location>
</feature>
<feature type="compositionally biased region" description="Low complexity" evidence="3">
    <location>
        <begin position="173"/>
        <end position="188"/>
    </location>
</feature>
<feature type="compositionally biased region" description="Basic and acidic residues" evidence="3">
    <location>
        <begin position="209"/>
        <end position="266"/>
    </location>
</feature>
<feature type="modified residue" description="N-acetylglycine" evidence="7">
    <location>
        <position position="2"/>
    </location>
</feature>
<feature type="modified residue" description="Phosphoserine" evidence="1">
    <location>
        <position position="136"/>
    </location>
</feature>
<feature type="modified residue" description="Phosphoserine" evidence="1">
    <location>
        <position position="137"/>
    </location>
</feature>
<feature type="modified residue" description="Omega-N-methylarginine" evidence="23">
    <location>
        <position position="152"/>
    </location>
</feature>
<feature type="modified residue" description="Phosphoserine" evidence="21 22 24">
    <location>
        <position position="204"/>
    </location>
</feature>
<feature type="sequence variant" id="VAR_082580" description="Found in a patient with a form of spinal muscular atrophy; uncertain significance." evidence="11">
    <original>P</original>
    <variation>R</variation>
    <location>
        <position position="79"/>
    </location>
</feature>
<feature type="mutagenesis site" description="Decreases affinity for RNA binding. Does not affect The NEXT complex assembly. Impairs snRNA binding." evidence="10">
    <original>F</original>
    <variation>A</variation>
    <location>
        <position position="13"/>
    </location>
</feature>
<feature type="mutagenesis site" description="Impaired interaction with ZCCHC8; when associated with E-29." evidence="13">
    <original>L</original>
    <variation>E</variation>
    <location>
        <position position="25"/>
    </location>
</feature>
<feature type="mutagenesis site" description="Impaired interaction with ZCCHC8; when associated with E-25." evidence="13">
    <original>L</original>
    <variation>E</variation>
    <location>
        <position position="29"/>
    </location>
</feature>
<feature type="mutagenesis site" description="Abrogates the interaction with 7SK small nuclear RNA (7SK); when associated with A-52 and A-54. Does not affect interaction between HEXIM1, CDK9 and 7SK small nuclear RNA (7SK); when associated with A-52 and A-54. Does not affect interaction with MEPCE and LARP7; when associated with A-52 and A-54. Decreases induction of P-TEFb-dependent DNA damage response (DDR); when associated with A-52 and A-54." evidence="14">
    <original>K</original>
    <variation>A</variation>
    <location>
        <position position="50"/>
    </location>
</feature>
<feature type="mutagenesis site" description="Decreases affinity for RNA binding. Abrogates the interaction with 7SK small nuclear RNA (7SK); when associated with A-50 and A-54. Does not affect interaction between HEXIM1, CDK9 and 7SK small nuclear RNA (7SK); when associated with A-50 and A-54. Does not affect interaction with MEPCE and LARP7; when associated with A-50 and A-54. Decreases induction of P-TEFb-dependent DNA damage response (DDR); when associated with A-50 and A-54." evidence="10 14">
    <original>F</original>
    <variation>A</variation>
    <location>
        <position position="52"/>
    </location>
</feature>
<feature type="mutagenesis site" description="Abrogates the interaction with 7SK small nuclear RNA (7SK); when associated with A-50 and A-52. Does not affect interaction between HEXIM1, CDK9 and 7SK small nuclear RNA (7SK); when associated with A-50 and A-52. Does not affect interaction with MEPCE and LARP7; when associated with A-50 and A-52. Decreases induction of P-TEFb-dependent DNA damage response (DDR); when associated with A-50 and A-52." evidence="14">
    <original>F</original>
    <variation>A</variation>
    <location>
        <position position="54"/>
    </location>
</feature>
<feature type="mutagenesis site" description="Reduced interaction with ZCCHC8, and impaired interaction with SF3B2/SAP145; when associated with E-69." evidence="13">
    <original>Y</original>
    <variation>A</variation>
    <location>
        <position position="65"/>
    </location>
</feature>
<feature type="mutagenesis site" description="Reduced interaction with ZCCHC8, and impaired interaction with SF3B2/SAP145; when associated with A-65." evidence="13">
    <original>L</original>
    <variation>E</variation>
    <location>
        <position position="69"/>
    </location>
</feature>
<feature type="mutagenesis site" description="Impairs phosphorylation. Impairs phosphorylation; when associated with S-204. Prevents PROMPTs accumulation to &gt;50%." evidence="6 8">
    <original>S</original>
    <variation>A</variation>
    <location>
        <position position="136"/>
    </location>
</feature>
<feature type="mutagenesis site" description="Impairs phosphorylation. Impairs phosphorylation; when associated with S-136." evidence="6">
    <original>S</original>
    <variation>A</variation>
    <location>
        <position position="204"/>
    </location>
</feature>
<feature type="sequence conflict" description="In Ref. 2; BAA92036." evidence="15" ref="2">
    <original>H</original>
    <variation>Y</variation>
    <location>
        <position position="102"/>
    </location>
</feature>
<feature type="sequence conflict" description="In Ref. 2; BAA92036." evidence="15" ref="2">
    <original>P</original>
    <variation>PS</variation>
    <location>
        <position position="114"/>
    </location>
</feature>
<feature type="helix" evidence="27">
    <location>
        <begin position="8"/>
        <end position="10"/>
    </location>
</feature>
<feature type="strand" evidence="27">
    <location>
        <begin position="11"/>
        <end position="15"/>
    </location>
</feature>
<feature type="helix" evidence="27">
    <location>
        <begin position="23"/>
        <end position="31"/>
    </location>
</feature>
<feature type="strand" evidence="27">
    <location>
        <begin position="36"/>
        <end position="40"/>
    </location>
</feature>
<feature type="strand" evidence="26">
    <location>
        <begin position="45"/>
        <end position="47"/>
    </location>
</feature>
<feature type="strand" evidence="27">
    <location>
        <begin position="53"/>
        <end position="59"/>
    </location>
</feature>
<feature type="helix" evidence="27">
    <location>
        <begin position="62"/>
        <end position="70"/>
    </location>
</feature>
<feature type="strand" evidence="25">
    <location>
        <begin position="75"/>
        <end position="78"/>
    </location>
</feature>
<feature type="strand" evidence="27">
    <location>
        <begin position="81"/>
        <end position="84"/>
    </location>
</feature>
<feature type="strand" evidence="25">
    <location>
        <begin position="89"/>
        <end position="91"/>
    </location>
</feature>
<accession>Q9Y580</accession>
<accession>B2R6K8</accession>
<accession>Q9NUT4</accession>
<dbReference type="EMBL" id="AF156098">
    <property type="protein sequence ID" value="AAD39257.1"/>
    <property type="molecule type" value="mRNA"/>
</dbReference>
<dbReference type="EMBL" id="AK002015">
    <property type="protein sequence ID" value="BAA92036.1"/>
    <property type="molecule type" value="mRNA"/>
</dbReference>
<dbReference type="EMBL" id="AK312619">
    <property type="protein sequence ID" value="BAG35505.1"/>
    <property type="molecule type" value="mRNA"/>
</dbReference>
<dbReference type="EMBL" id="CH471065">
    <property type="protein sequence ID" value="EAW67247.1"/>
    <property type="molecule type" value="Genomic_DNA"/>
</dbReference>
<dbReference type="EMBL" id="BC034381">
    <property type="protein sequence ID" value="AAH34381.1"/>
    <property type="molecule type" value="mRNA"/>
</dbReference>
<dbReference type="CCDS" id="CCDS8370.1"/>
<dbReference type="RefSeq" id="NP_001272974.1">
    <property type="nucleotide sequence ID" value="NM_001286045.1"/>
</dbReference>
<dbReference type="RefSeq" id="NP_001272975.1">
    <property type="nucleotide sequence ID" value="NM_001286046.1"/>
</dbReference>
<dbReference type="RefSeq" id="NP_001272976.1">
    <property type="nucleotide sequence ID" value="NM_001286047.1"/>
</dbReference>
<dbReference type="RefSeq" id="NP_001272977.1">
    <property type="nucleotide sequence ID" value="NM_001286048.1"/>
</dbReference>
<dbReference type="RefSeq" id="NP_057174.1">
    <property type="nucleotide sequence ID" value="NM_016090.4"/>
</dbReference>
<dbReference type="PDB" id="2M8H">
    <property type="method" value="NMR"/>
    <property type="chains" value="A=6-94"/>
</dbReference>
<dbReference type="PDB" id="5IQQ">
    <property type="method" value="X-ray"/>
    <property type="resolution" value="2.52 A"/>
    <property type="chains" value="A/B/C/D/E=1-91"/>
</dbReference>
<dbReference type="PDB" id="5LXR">
    <property type="method" value="X-ray"/>
    <property type="resolution" value="2.00 A"/>
    <property type="chains" value="A=1-86"/>
</dbReference>
<dbReference type="PDB" id="5LXY">
    <property type="method" value="X-ray"/>
    <property type="resolution" value="2.85 A"/>
    <property type="chains" value="A/B/E/G/I/K/M=1-86"/>
</dbReference>
<dbReference type="PDB" id="7S7B">
    <property type="method" value="EM"/>
    <property type="resolution" value="4.06 A"/>
    <property type="chains" value="C/G=7-86"/>
</dbReference>
<dbReference type="PDB" id="7S7C">
    <property type="method" value="EM"/>
    <property type="resolution" value="3.62 A"/>
    <property type="chains" value="C=7-86"/>
</dbReference>
<dbReference type="PDBsum" id="2M8H"/>
<dbReference type="PDBsum" id="5IQQ"/>
<dbReference type="PDBsum" id="5LXR"/>
<dbReference type="PDBsum" id="5LXY"/>
<dbReference type="PDBsum" id="7S7B"/>
<dbReference type="PDBsum" id="7S7C"/>
<dbReference type="BMRB" id="Q9Y580"/>
<dbReference type="EMDB" id="EMD-14514"/>
<dbReference type="EMDB" id="EMD-14515"/>
<dbReference type="EMDB" id="EMD-24882"/>
<dbReference type="EMDB" id="EMD-24883"/>
<dbReference type="EMDB" id="EMD-24884"/>
<dbReference type="SMR" id="Q9Y580"/>
<dbReference type="BioGRID" id="115478">
    <property type="interactions" value="156"/>
</dbReference>
<dbReference type="ComplexPortal" id="CPX-2735">
    <property type="entry name" value="Nuclear exosome targeting complex"/>
</dbReference>
<dbReference type="CORUM" id="Q9Y580"/>
<dbReference type="DIP" id="DIP-48833N"/>
<dbReference type="FunCoup" id="Q9Y580">
    <property type="interactions" value="3223"/>
</dbReference>
<dbReference type="IntAct" id="Q9Y580">
    <property type="interactions" value="85"/>
</dbReference>
<dbReference type="MINT" id="Q9Y580"/>
<dbReference type="STRING" id="9606.ENSP00000364639"/>
<dbReference type="GlyCosmos" id="Q9Y580">
    <property type="glycosylation" value="1 site, 1 glycan"/>
</dbReference>
<dbReference type="GlyGen" id="Q9Y580">
    <property type="glycosylation" value="4 sites, 1 N-linked glycan (1 site), 1 O-linked glycan (3 sites)"/>
</dbReference>
<dbReference type="iPTMnet" id="Q9Y580"/>
<dbReference type="MetOSite" id="Q9Y580"/>
<dbReference type="PhosphoSitePlus" id="Q9Y580"/>
<dbReference type="BioMuta" id="RBM7"/>
<dbReference type="DMDM" id="9978697"/>
<dbReference type="CPTAC" id="CPTAC-1365"/>
<dbReference type="CPTAC" id="CPTAC-943"/>
<dbReference type="jPOST" id="Q9Y580"/>
<dbReference type="MassIVE" id="Q9Y580"/>
<dbReference type="PaxDb" id="9606-ENSP00000364639"/>
<dbReference type="PeptideAtlas" id="Q9Y580"/>
<dbReference type="ProteomicsDB" id="86311"/>
<dbReference type="Pumba" id="Q9Y580"/>
<dbReference type="Antibodypedia" id="2822">
    <property type="antibodies" value="113 antibodies from 20 providers"/>
</dbReference>
<dbReference type="DNASU" id="10179"/>
<dbReference type="Ensembl" id="ENST00000540163.5">
    <property type="protein sequence ID" value="ENSP00000439918.1"/>
    <property type="gene ID" value="ENSG00000076053.12"/>
</dbReference>
<dbReference type="GeneID" id="10179"/>
<dbReference type="KEGG" id="hsa:10179"/>
<dbReference type="UCSC" id="uc001pov.5">
    <property type="organism name" value="human"/>
</dbReference>
<dbReference type="AGR" id="HGNC:9904"/>
<dbReference type="CTD" id="10179"/>
<dbReference type="DisGeNET" id="10179"/>
<dbReference type="GeneCards" id="RBM7"/>
<dbReference type="HGNC" id="HGNC:9904">
    <property type="gene designation" value="RBM7"/>
</dbReference>
<dbReference type="HPA" id="ENSG00000076053">
    <property type="expression patterns" value="Low tissue specificity"/>
</dbReference>
<dbReference type="MalaCards" id="RBM7"/>
<dbReference type="MIM" id="612413">
    <property type="type" value="gene"/>
</dbReference>
<dbReference type="neXtProt" id="NX_Q9Y580"/>
<dbReference type="OpenTargets" id="ENSG00000076053"/>
<dbReference type="PharmGKB" id="PA34269"/>
<dbReference type="VEuPathDB" id="HostDB:ENSG00000076053"/>
<dbReference type="eggNOG" id="KOG4454">
    <property type="taxonomic scope" value="Eukaryota"/>
</dbReference>
<dbReference type="GeneTree" id="ENSGT00870000136493"/>
<dbReference type="HOGENOM" id="CLU_087967_0_0_1"/>
<dbReference type="InParanoid" id="Q9Y580"/>
<dbReference type="OrthoDB" id="407442at2759"/>
<dbReference type="PAN-GO" id="Q9Y580">
    <property type="GO annotations" value="3 GO annotations based on evolutionary models"/>
</dbReference>
<dbReference type="PhylomeDB" id="Q9Y580"/>
<dbReference type="TreeFam" id="TF323596"/>
<dbReference type="PathwayCommons" id="Q9Y580"/>
<dbReference type="Reactome" id="R-HSA-72163">
    <property type="pathway name" value="mRNA Splicing - Major Pathway"/>
</dbReference>
<dbReference type="Reactome" id="R-HSA-9843970">
    <property type="pathway name" value="Regulation of endogenous retroelements by the Human Silencing Hub (HUSH) complex"/>
</dbReference>
<dbReference type="SignaLink" id="Q9Y580"/>
<dbReference type="SIGNOR" id="Q9Y580"/>
<dbReference type="BioGRID-ORCS" id="10179">
    <property type="hits" value="38 hits in 1123 CRISPR screens"/>
</dbReference>
<dbReference type="CD-CODE" id="1A18FFC4">
    <property type="entry name" value="Paraspeckle"/>
</dbReference>
<dbReference type="ChiTaRS" id="RBM7">
    <property type="organism name" value="human"/>
</dbReference>
<dbReference type="EvolutionaryTrace" id="Q9Y580"/>
<dbReference type="GeneWiki" id="RBM7"/>
<dbReference type="GenomeRNAi" id="10179"/>
<dbReference type="Pharos" id="Q9Y580">
    <property type="development level" value="Tbio"/>
</dbReference>
<dbReference type="PRO" id="PR:Q9Y580"/>
<dbReference type="Proteomes" id="UP000005640">
    <property type="component" value="Chromosome 11"/>
</dbReference>
<dbReference type="RNAct" id="Q9Y580">
    <property type="molecule type" value="protein"/>
</dbReference>
<dbReference type="Bgee" id="ENSG00000076053">
    <property type="expression patterns" value="Expressed in cartilage tissue and 200 other cell types or tissues"/>
</dbReference>
<dbReference type="ExpressionAtlas" id="Q9Y580">
    <property type="expression patterns" value="baseline and differential"/>
</dbReference>
<dbReference type="GO" id="GO:0005654">
    <property type="term" value="C:nucleoplasm"/>
    <property type="evidence" value="ECO:0000314"/>
    <property type="project" value="UniProtKB"/>
</dbReference>
<dbReference type="GO" id="GO:0005634">
    <property type="term" value="C:nucleus"/>
    <property type="evidence" value="ECO:0000314"/>
    <property type="project" value="UniProtKB"/>
</dbReference>
<dbReference type="GO" id="GO:0071889">
    <property type="term" value="F:14-3-3 protein binding"/>
    <property type="evidence" value="ECO:0000314"/>
    <property type="project" value="UniProtKB"/>
</dbReference>
<dbReference type="GO" id="GO:0097157">
    <property type="term" value="F:pre-mRNA intronic binding"/>
    <property type="evidence" value="ECO:0000314"/>
    <property type="project" value="UniProtKB"/>
</dbReference>
<dbReference type="GO" id="GO:0003723">
    <property type="term" value="F:RNA binding"/>
    <property type="evidence" value="ECO:0000314"/>
    <property type="project" value="UniProtKB"/>
</dbReference>
<dbReference type="GO" id="GO:0003727">
    <property type="term" value="F:single-stranded RNA binding"/>
    <property type="evidence" value="ECO:0000318"/>
    <property type="project" value="GO_Central"/>
</dbReference>
<dbReference type="GO" id="GO:0017069">
    <property type="term" value="F:snRNA binding"/>
    <property type="evidence" value="ECO:0000314"/>
    <property type="project" value="UniProtKB"/>
</dbReference>
<dbReference type="GO" id="GO:0051321">
    <property type="term" value="P:meiotic cell cycle"/>
    <property type="evidence" value="ECO:0007669"/>
    <property type="project" value="UniProtKB-KW"/>
</dbReference>
<dbReference type="GO" id="GO:0000381">
    <property type="term" value="P:regulation of alternative mRNA splicing, via spliceosome"/>
    <property type="evidence" value="ECO:0000318"/>
    <property type="project" value="GO_Central"/>
</dbReference>
<dbReference type="GO" id="GO:0016076">
    <property type="term" value="P:snRNA catabolic process"/>
    <property type="evidence" value="ECO:0000315"/>
    <property type="project" value="UniProtKB"/>
</dbReference>
<dbReference type="CDD" id="cd12592">
    <property type="entry name" value="RRM_RBM7"/>
    <property type="match status" value="1"/>
</dbReference>
<dbReference type="FunFam" id="3.30.70.330:FF:000261">
    <property type="entry name" value="RNA-binding motif protein 7"/>
    <property type="match status" value="1"/>
</dbReference>
<dbReference type="Gene3D" id="3.30.70.330">
    <property type="match status" value="1"/>
</dbReference>
<dbReference type="InterPro" id="IPR052285">
    <property type="entry name" value="NEXT_complex_subunit"/>
</dbReference>
<dbReference type="InterPro" id="IPR012677">
    <property type="entry name" value="Nucleotide-bd_a/b_plait_sf"/>
</dbReference>
<dbReference type="InterPro" id="IPR035979">
    <property type="entry name" value="RBD_domain_sf"/>
</dbReference>
<dbReference type="InterPro" id="IPR034500">
    <property type="entry name" value="RBM7_RRM"/>
</dbReference>
<dbReference type="InterPro" id="IPR000504">
    <property type="entry name" value="RRM_dom"/>
</dbReference>
<dbReference type="PANTHER" id="PTHR13798">
    <property type="entry name" value="RNA BINDING MOTIF RBM PROTEIN -RELATED"/>
    <property type="match status" value="1"/>
</dbReference>
<dbReference type="PANTHER" id="PTHR13798:SF4">
    <property type="entry name" value="RNA-BINDING PROTEIN 7"/>
    <property type="match status" value="1"/>
</dbReference>
<dbReference type="Pfam" id="PF00076">
    <property type="entry name" value="RRM_1"/>
    <property type="match status" value="1"/>
</dbReference>
<dbReference type="SMART" id="SM00360">
    <property type="entry name" value="RRM"/>
    <property type="match status" value="1"/>
</dbReference>
<dbReference type="SUPFAM" id="SSF54928">
    <property type="entry name" value="RNA-binding domain, RBD"/>
    <property type="match status" value="1"/>
</dbReference>
<dbReference type="PROSITE" id="PS50102">
    <property type="entry name" value="RRM"/>
    <property type="match status" value="1"/>
</dbReference>
<evidence type="ECO:0000250" key="1">
    <source>
        <dbReference type="UniProtKB" id="Q9CQT2"/>
    </source>
</evidence>
<evidence type="ECO:0000255" key="2">
    <source>
        <dbReference type="PROSITE-ProRule" id="PRU00176"/>
    </source>
</evidence>
<evidence type="ECO:0000256" key="3">
    <source>
        <dbReference type="SAM" id="MobiDB-lite"/>
    </source>
</evidence>
<evidence type="ECO:0000269" key="4">
    <source>
    </source>
</evidence>
<evidence type="ECO:0000269" key="5">
    <source>
    </source>
</evidence>
<evidence type="ECO:0000269" key="6">
    <source>
    </source>
</evidence>
<evidence type="ECO:0000269" key="7">
    <source>
    </source>
</evidence>
<evidence type="ECO:0000269" key="8">
    <source>
    </source>
</evidence>
<evidence type="ECO:0000269" key="9">
    <source>
    </source>
</evidence>
<evidence type="ECO:0000269" key="10">
    <source>
    </source>
</evidence>
<evidence type="ECO:0000269" key="11">
    <source>
    </source>
</evidence>
<evidence type="ECO:0000269" key="12">
    <source>
    </source>
</evidence>
<evidence type="ECO:0000269" key="13">
    <source>
    </source>
</evidence>
<evidence type="ECO:0000269" key="14">
    <source>
    </source>
</evidence>
<evidence type="ECO:0000305" key="15"/>
<evidence type="ECO:0000312" key="16">
    <source>
        <dbReference type="HGNC" id="HGNC:9904"/>
    </source>
</evidence>
<evidence type="ECO:0007744" key="17">
    <source>
        <dbReference type="PDB" id="2M8H"/>
    </source>
</evidence>
<evidence type="ECO:0007744" key="18">
    <source>
        <dbReference type="PDB" id="5IQQ"/>
    </source>
</evidence>
<evidence type="ECO:0007744" key="19">
    <source>
        <dbReference type="PDB" id="5LXR"/>
    </source>
</evidence>
<evidence type="ECO:0007744" key="20">
    <source>
        <dbReference type="PDB" id="5LXY"/>
    </source>
</evidence>
<evidence type="ECO:0007744" key="21">
    <source>
    </source>
</evidence>
<evidence type="ECO:0007744" key="22">
    <source>
    </source>
</evidence>
<evidence type="ECO:0007744" key="23">
    <source>
    </source>
</evidence>
<evidence type="ECO:0007744" key="24">
    <source>
    </source>
</evidence>
<evidence type="ECO:0007829" key="25">
    <source>
        <dbReference type="PDB" id="2M8H"/>
    </source>
</evidence>
<evidence type="ECO:0007829" key="26">
    <source>
        <dbReference type="PDB" id="5IQQ"/>
    </source>
</evidence>
<evidence type="ECO:0007829" key="27">
    <source>
        <dbReference type="PDB" id="5LXR"/>
    </source>
</evidence>
<keyword id="KW-0002">3D-structure</keyword>
<keyword id="KW-0007">Acetylation</keyword>
<keyword id="KW-0469">Meiosis</keyword>
<keyword id="KW-0488">Methylation</keyword>
<keyword id="KW-0539">Nucleus</keyword>
<keyword id="KW-0597">Phosphoprotein</keyword>
<keyword id="KW-1267">Proteomics identification</keyword>
<keyword id="KW-1185">Reference proteome</keyword>
<keyword id="KW-0694">RNA-binding</keyword>
<name>RBM7_HUMAN</name>
<comment type="function">
    <text evidence="6 8 9 10 12 14">RNA-binding subunit of the trimeric nuclear exosome targeting (NEXT) complex, a complex that functions as an RNA exosome cofactor that directs a subset of non-coding short-lived RNAs for exosomal degradation (PubMed:25189701, PubMed:25525152, PubMed:25578728, PubMed:25852104, PubMed:27871484). NEXT is involved in surveillance and turnover of aberrant transcripts and non-coding RNAs (PubMed:25189701, PubMed:25852104, PubMed:27871484). Binds preferentially polyuridine sequences and associates with newly synthesized RNAs, including pre-mRNAs and short-lived exosome substrates such as promoter upstream transcripts (PROMPTs), enhancer RNAs (eRNAs), and 3'-extended products from small nuclear RNAs (snRNAs) (PubMed:25189701, PubMed:25525152, PubMed:25578728, PubMed:25852104). Participates in several biological processes including DNA damage response (DDR) and stress response (PubMed:25525152, PubMed:30824372). During stress response, activation of the p38MAPK-MK2 pathway decreases RBM7-RNA-binding and subsequently the RNA exosome degradation activities, thereby modulating the turnover of non-coding transcriptome (PubMed:25525152). Participates in DNA damage response (DDR), through its interaction with MEPCE and LARP7, the core subunits of 7SK snRNP complex, that release the positive transcription elongation factor b (P-TEFb) complex from the 7SK snRNP. In turn, activation of P-TEFb complex induces the transcription of P-TEFb-dependent DDR genes to promote cell viability (PubMed:30824372).</text>
</comment>
<comment type="subunit">
    <text evidence="4 6 12 13 14">Component of the nuclear exosome targeting (NEXT) complex composed of MTREX, ZCCHC8, and RBM7 that directs a subset of non-coding short-lived RNAs for exosomal degradation (PubMed:25189701, PubMed:27871484, PubMed:27905398). Interacts with ZCCHC8 and SF3B2/SAP145 (PubMed:16263084, PubMed:27871484, PubMed:27905398). Binds to MTREX through ZCCHC8 (PubMed:27871484). Interacts with YWHAE and YWHAZ; these interactions are stress-dependent and RBM7 phosphorylation dependent; release RNA from the NEXT complex and may affect RNA targeting to the nuclear RNA exosomome for degradation (PubMed:25189701). Interacts with MEPCE and LARP7, the core subunits of 7SK snRNP; upon genotoxic stress this interaction is enhanced, triggering the release of inactive P-TEFb complex from the core and P-TEFb complex activation (PubMed:30824372).</text>
</comment>
<comment type="interaction">
    <interactant intactId="EBI-746903">
        <id>Q9Y580</id>
    </interactant>
    <interactant intactId="EBI-347573">
        <id>A6NC98</id>
        <label>CCDC88B</label>
    </interactant>
    <organismsDiffer>false</organismsDiffer>
    <experiments>3</experiments>
</comment>
<comment type="interaction">
    <interactant intactId="EBI-746903">
        <id>Q9Y580</id>
    </interactant>
    <interactant intactId="EBI-749523">
        <id>Q96CN4</id>
        <label>EVI5L</label>
    </interactant>
    <organismsDiffer>false</organismsDiffer>
    <experiments>3</experiments>
</comment>
<comment type="interaction">
    <interactant intactId="EBI-746903">
        <id>Q9Y580</id>
    </interactant>
    <interactant intactId="EBI-749111">
        <id>Q13435</id>
        <label>SF3B2</label>
    </interactant>
    <organismsDiffer>false</organismsDiffer>
    <experiments>5</experiments>
</comment>
<comment type="interaction">
    <interactant intactId="EBI-746903">
        <id>Q9Y580</id>
    </interactant>
    <interactant intactId="EBI-1263058">
        <id>Q6NZY4</id>
        <label>ZCCHC8</label>
    </interactant>
    <organismsDiffer>false</organismsDiffer>
    <experiments>13</experiments>
</comment>
<comment type="subcellular location">
    <subcellularLocation>
        <location evidence="5 10">Nucleus</location>
        <location evidence="5 10">Nucleoplasm</location>
    </subcellularLocation>
    <subcellularLocation>
        <location evidence="1">Nucleus</location>
    </subcellularLocation>
    <text evidence="5">Excluded from the nucleolus.</text>
</comment>
<comment type="tissue specificity">
    <text>Ubiquitous.</text>
</comment>
<comment type="domain">
    <text evidence="10">The RRM domain mediates RNA binding; the RNA must have four nucleotides for efficient binding (PubMed:25852104). Mediates the interaction of NEXT complex with promoter upstream transcripts (PROMPTs) and potentially aberrant forms of other non coding RNAs, such as snRNAs (PubMed:25852104). The RRM domain exhibits specificity for polyuridine sequences (PubMed:25852104).</text>
</comment>
<comment type="PTM">
    <text evidence="6 8">Phosphorylated at Ser-136 by MAPK14/p38-alpha-activated MAPKAPK2/MK2; this phosphorylation is stress-dependent; this phosphorylation decreases its RNA-binding capacity therefore affecting RNA nuclear exosome-mediated degradation (PubMed:25189701, PubMed:25525152). This phosphorylation mediates YWHAE and YWHAZ interactions (PubMed:25189701).</text>
</comment>
<protein>
    <recommendedName>
        <fullName evidence="15">RNA-binding protein 7</fullName>
    </recommendedName>
    <alternativeName>
        <fullName evidence="16">RNA-binding motif protein 7</fullName>
    </alternativeName>
</protein>
<organism>
    <name type="scientific">Homo sapiens</name>
    <name type="common">Human</name>
    <dbReference type="NCBI Taxonomy" id="9606"/>
    <lineage>
        <taxon>Eukaryota</taxon>
        <taxon>Metazoa</taxon>
        <taxon>Chordata</taxon>
        <taxon>Craniata</taxon>
        <taxon>Vertebrata</taxon>
        <taxon>Euteleostomi</taxon>
        <taxon>Mammalia</taxon>
        <taxon>Eutheria</taxon>
        <taxon>Euarchontoglires</taxon>
        <taxon>Primates</taxon>
        <taxon>Haplorrhini</taxon>
        <taxon>Catarrhini</taxon>
        <taxon>Hominidae</taxon>
        <taxon>Homo</taxon>
    </lineage>
</organism>
<sequence length="266" mass="30504">MGAAAAEADRTLFVGNLETKVTEELLFELFHQAGPVIKVKIPKDKDGKPKQFAFVNFKHEVSVPYAMNLLNGIKLYGRPIKIQFRSGSSHAPQDVSLSYPQHHVGNSSPTSTSPSRYERTMDNMTSSAQIIQRSFSSPENFQRQAVMNSALRQMSYGGKFGSSPLDQSGFSPSVQSHSHSFNQSSSSQWRQGTPSSQRKVRMNSYPYLADRHYSREQRYTDHGSDHHYRGKRDDFFYEDRNHDDWSHDYDNRRDSSRDGKWRSSRH</sequence>